<comment type="function">
    <text evidence="2 3 5">Involved in the cellular response to hydrogen peroxide (H(2)O(2)) stress (PubMed:21378183). During H(2)O(2) stress, prevents oxidative damage to both DNA and proteins by diminishing the amount of unincorporated iron within the cell (PubMed:21378183). Binds double-stranded, bulge-containing, bubble duplex and Holliday junction DNA with approximately equal affinity and ssDNA with lower affinity (PubMed:32796037). DNA binding shows positive cooperativity (PubMed:32796037). Cofitness analysis suggests it might be involved in DNA repair pathways (Probable) (PubMed:32796037).</text>
</comment>
<comment type="subcellular location">
    <subcellularLocation>
        <location evidence="4">Cytoplasm</location>
    </subcellularLocation>
</comment>
<comment type="induction">
    <text evidence="2">Induced by H(2)O(2), via OxyR.</text>
</comment>
<comment type="domain">
    <text evidence="3">Has a wedge shape with a highly basic apical cleft (a cantaloupe fold), where DNA might be able to bind.</text>
</comment>
<comment type="disruption phenotype">
    <text evidence="2 3">In a catalase/peroxidase-deficient (Hpx(-)) background, yaaA deletion mutants grow poorly and form filaments in aerobic medium. Mutants show higher levels of DNA damage and polypeptide damage during H(2)O(2) stress. They also have an unusually high level of intracellular unincorporated iron (PubMed:21378183). No change in growth in the presence of 7-cyano-7-deazaguanine (preQ0), a 7-deazaguanine derivative that can be incorporated into DNA (PubMed:32796037).</text>
</comment>
<comment type="similarity">
    <text evidence="1">Belongs to the UPF0246 family.</text>
</comment>
<protein>
    <recommendedName>
        <fullName evidence="4">DNA-binding and peroxide stress resistance protein YaaA</fullName>
    </recommendedName>
    <alternativeName>
        <fullName evidence="4">UPF0246 protein YaaA</fullName>
    </alternativeName>
</protein>
<feature type="chain" id="PRO_0000203983" description="DNA-binding and peroxide stress resistance protein YaaA">
    <location>
        <begin position="1"/>
        <end position="258"/>
    </location>
</feature>
<feature type="short sequence motif" description="Helix-hairpin-helix" evidence="5">
    <location>
        <begin position="35"/>
        <end position="66"/>
    </location>
</feature>
<feature type="strand" evidence="7">
    <location>
        <begin position="2"/>
        <end position="5"/>
    </location>
</feature>
<feature type="strand" evidence="7">
    <location>
        <begin position="9"/>
        <end position="11"/>
    </location>
</feature>
<feature type="strand" evidence="7">
    <location>
        <begin position="13"/>
        <end position="15"/>
    </location>
</feature>
<feature type="helix" evidence="7">
    <location>
        <begin position="28"/>
        <end position="38"/>
    </location>
</feature>
<feature type="helix" evidence="7">
    <location>
        <begin position="43"/>
        <end position="50"/>
    </location>
</feature>
<feature type="helix" evidence="7">
    <location>
        <begin position="54"/>
        <end position="66"/>
    </location>
</feature>
<feature type="turn" evidence="7">
    <location>
        <begin position="73"/>
        <end position="75"/>
    </location>
</feature>
<feature type="helix" evidence="7">
    <location>
        <begin position="79"/>
        <end position="82"/>
    </location>
</feature>
<feature type="strand" evidence="7">
    <location>
        <begin position="83"/>
        <end position="85"/>
    </location>
</feature>
<feature type="helix" evidence="7">
    <location>
        <begin position="86"/>
        <end position="91"/>
    </location>
</feature>
<feature type="helix" evidence="7">
    <location>
        <begin position="93"/>
        <end position="95"/>
    </location>
</feature>
<feature type="helix" evidence="7">
    <location>
        <begin position="98"/>
        <end position="107"/>
    </location>
</feature>
<feature type="strand" evidence="7">
    <location>
        <begin position="108"/>
        <end position="112"/>
    </location>
</feature>
<feature type="turn" evidence="7">
    <location>
        <begin position="113"/>
        <end position="115"/>
    </location>
</feature>
<feature type="strand" evidence="7">
    <location>
        <begin position="116"/>
        <end position="118"/>
    </location>
</feature>
<feature type="strand" evidence="7">
    <location>
        <begin position="122"/>
        <end position="124"/>
    </location>
</feature>
<feature type="strand" evidence="7">
    <location>
        <begin position="140"/>
        <end position="142"/>
    </location>
</feature>
<feature type="helix" evidence="7">
    <location>
        <begin position="143"/>
        <end position="147"/>
    </location>
</feature>
<feature type="helix" evidence="7">
    <location>
        <begin position="150"/>
        <end position="157"/>
    </location>
</feature>
<feature type="strand" evidence="7">
    <location>
        <begin position="161"/>
        <end position="163"/>
    </location>
</feature>
<feature type="strand" evidence="7">
    <location>
        <begin position="166"/>
        <end position="171"/>
    </location>
</feature>
<feature type="helix" evidence="7">
    <location>
        <begin position="173"/>
        <end position="176"/>
    </location>
</feature>
<feature type="helix" evidence="7">
    <location>
        <begin position="181"/>
        <end position="183"/>
    </location>
</feature>
<feature type="strand" evidence="7">
    <location>
        <begin position="185"/>
        <end position="197"/>
    </location>
</feature>
<feature type="strand" evidence="7">
    <location>
        <begin position="200"/>
        <end position="202"/>
    </location>
</feature>
<feature type="helix" evidence="7">
    <location>
        <begin position="205"/>
        <end position="221"/>
    </location>
</feature>
<feature type="helix" evidence="7">
    <location>
        <begin position="227"/>
        <end position="232"/>
    </location>
</feature>
<feature type="helix" evidence="7">
    <location>
        <begin position="235"/>
        <end position="237"/>
    </location>
</feature>
<feature type="strand" evidence="7">
    <location>
        <begin position="249"/>
        <end position="254"/>
    </location>
</feature>
<gene>
    <name type="primary">yaaA</name>
    <name type="ordered locus">b0006</name>
    <name type="ordered locus">JW0005</name>
</gene>
<proteinExistence type="evidence at protein level"/>
<sequence>MLILISPAKTLDYQSPLTTTRYTLPELLDNSQQLIHEARKLTPPQISTLMRISDKLAGINAARFHDWQPDFTPANARQAILAFKGDVYTGLQAETFSEDDFDFAQQHLRMLSGLYGVLRPLDLMQPYRLEMGIRLENARGKDLYQFWGDIITNKLNEALAAQGDNVVINLASDEYFKSVKPKKLNAEIIKPVFLDEKNGKFKIISFYAKKARGLMSRFIIENRLTKPEQLTGFNSEGYFFDEDSSSNGELVFKRYEQR</sequence>
<accession>P0A8I3</accession>
<accession>P11288</accession>
<keyword id="KW-0002">3D-structure</keyword>
<keyword id="KW-0963">Cytoplasm</keyword>
<keyword id="KW-0238">DNA-binding</keyword>
<keyword id="KW-1185">Reference proteome</keyword>
<keyword id="KW-0346">Stress response</keyword>
<evidence type="ECO:0000255" key="1">
    <source>
        <dbReference type="HAMAP-Rule" id="MF_00652"/>
    </source>
</evidence>
<evidence type="ECO:0000269" key="2">
    <source>
    </source>
</evidence>
<evidence type="ECO:0000269" key="3">
    <source>
    </source>
</evidence>
<evidence type="ECO:0000305" key="4"/>
<evidence type="ECO:0000305" key="5">
    <source>
    </source>
</evidence>
<evidence type="ECO:0007744" key="6">
    <source>
        <dbReference type="PDB" id="5CAJ"/>
    </source>
</evidence>
<evidence type="ECO:0007829" key="7">
    <source>
        <dbReference type="PDB" id="5CAJ"/>
    </source>
</evidence>
<dbReference type="EMBL" id="U00096">
    <property type="protein sequence ID" value="AAC73117.1"/>
    <property type="molecule type" value="Genomic_DNA"/>
</dbReference>
<dbReference type="EMBL" id="AP009048">
    <property type="protein sequence ID" value="BAB96584.1"/>
    <property type="molecule type" value="Genomic_DNA"/>
</dbReference>
<dbReference type="EMBL" id="U14003">
    <property type="protein sequence ID" value="AAA97304.1"/>
    <property type="molecule type" value="Genomic_DNA"/>
</dbReference>
<dbReference type="PIR" id="S40534">
    <property type="entry name" value="Q3ECTC"/>
</dbReference>
<dbReference type="RefSeq" id="NP_414547.1">
    <property type="nucleotide sequence ID" value="NC_000913.3"/>
</dbReference>
<dbReference type="RefSeq" id="WP_000906197.1">
    <property type="nucleotide sequence ID" value="NZ_LN832404.1"/>
</dbReference>
<dbReference type="PDB" id="5CAJ">
    <property type="method" value="X-ray"/>
    <property type="resolution" value="1.65 A"/>
    <property type="chains" value="A/B=2-258"/>
</dbReference>
<dbReference type="PDBsum" id="5CAJ"/>
<dbReference type="SMR" id="P0A8I3"/>
<dbReference type="BioGRID" id="4261937">
    <property type="interactions" value="21"/>
</dbReference>
<dbReference type="BioGRID" id="849152">
    <property type="interactions" value="1"/>
</dbReference>
<dbReference type="DIP" id="DIP-35783N"/>
<dbReference type="FunCoup" id="P0A8I3">
    <property type="interactions" value="101"/>
</dbReference>
<dbReference type="IntAct" id="P0A8I3">
    <property type="interactions" value="6"/>
</dbReference>
<dbReference type="STRING" id="511145.b0006"/>
<dbReference type="jPOST" id="P0A8I3"/>
<dbReference type="PaxDb" id="511145-b0006"/>
<dbReference type="EnsemblBacteria" id="AAC73117">
    <property type="protein sequence ID" value="AAC73117"/>
    <property type="gene ID" value="b0006"/>
</dbReference>
<dbReference type="GeneID" id="944749"/>
<dbReference type="KEGG" id="ecj:JW0005"/>
<dbReference type="KEGG" id="eco:b0006"/>
<dbReference type="KEGG" id="ecoc:C3026_00035"/>
<dbReference type="PATRIC" id="fig|1411691.4.peg.2277"/>
<dbReference type="EchoBASE" id="EB0011"/>
<dbReference type="eggNOG" id="COG3022">
    <property type="taxonomic scope" value="Bacteria"/>
</dbReference>
<dbReference type="HOGENOM" id="CLU_061989_0_0_6"/>
<dbReference type="InParanoid" id="P0A8I3"/>
<dbReference type="OMA" id="WKNGQYK"/>
<dbReference type="OrthoDB" id="9777133at2"/>
<dbReference type="PhylomeDB" id="P0A8I3"/>
<dbReference type="BioCyc" id="EcoCyc:EG10011-MONOMER"/>
<dbReference type="EvolutionaryTrace" id="P0A8I3"/>
<dbReference type="PRO" id="PR:P0A8I3"/>
<dbReference type="Proteomes" id="UP000000625">
    <property type="component" value="Chromosome"/>
</dbReference>
<dbReference type="GO" id="GO:0005829">
    <property type="term" value="C:cytosol"/>
    <property type="evidence" value="ECO:0000314"/>
    <property type="project" value="EcoCyc"/>
</dbReference>
<dbReference type="GO" id="GO:0000217">
    <property type="term" value="F:DNA secondary structure binding"/>
    <property type="evidence" value="ECO:0000314"/>
    <property type="project" value="EcoCyc"/>
</dbReference>
<dbReference type="GO" id="GO:0033194">
    <property type="term" value="P:response to hydroperoxide"/>
    <property type="evidence" value="ECO:0000315"/>
    <property type="project" value="EcoCyc"/>
</dbReference>
<dbReference type="HAMAP" id="MF_00652">
    <property type="entry name" value="UPF0246"/>
    <property type="match status" value="1"/>
</dbReference>
<dbReference type="InterPro" id="IPR005583">
    <property type="entry name" value="YaaA"/>
</dbReference>
<dbReference type="NCBIfam" id="NF002541">
    <property type="entry name" value="PRK02101.1-1"/>
    <property type="match status" value="1"/>
</dbReference>
<dbReference type="NCBIfam" id="NF002542">
    <property type="entry name" value="PRK02101.1-3"/>
    <property type="match status" value="1"/>
</dbReference>
<dbReference type="PANTHER" id="PTHR30283:SF4">
    <property type="entry name" value="PEROXIDE STRESS RESISTANCE PROTEIN YAAA"/>
    <property type="match status" value="1"/>
</dbReference>
<dbReference type="PANTHER" id="PTHR30283">
    <property type="entry name" value="PEROXIDE STRESS RESPONSE PROTEIN YAAA"/>
    <property type="match status" value="1"/>
</dbReference>
<dbReference type="Pfam" id="PF03883">
    <property type="entry name" value="H2O2_YaaD"/>
    <property type="match status" value="1"/>
</dbReference>
<name>YAAA_ECOLI</name>
<reference key="1">
    <citation type="journal article" date="1992" name="Nucleic Acids Res.">
        <title>Systematic sequencing of the Escherichia coli genome: analysis of the 0-2.4 min region.</title>
        <authorList>
            <person name="Yura T."/>
            <person name="Mori H."/>
            <person name="Nagai H."/>
            <person name="Nagata T."/>
            <person name="Ishihama A."/>
            <person name="Fujita N."/>
            <person name="Isono K."/>
            <person name="Mizobuchi K."/>
            <person name="Nakata A."/>
        </authorList>
    </citation>
    <scope>NUCLEOTIDE SEQUENCE [LARGE SCALE GENOMIC DNA]</scope>
    <source>
        <strain>K12</strain>
    </source>
</reference>
<reference key="2">
    <citation type="journal article" date="1997" name="Science">
        <title>The complete genome sequence of Escherichia coli K-12.</title>
        <authorList>
            <person name="Blattner F.R."/>
            <person name="Plunkett G. III"/>
            <person name="Bloch C.A."/>
            <person name="Perna N.T."/>
            <person name="Burland V."/>
            <person name="Riley M."/>
            <person name="Collado-Vides J."/>
            <person name="Glasner J.D."/>
            <person name="Rode C.K."/>
            <person name="Mayhew G.F."/>
            <person name="Gregor J."/>
            <person name="Davis N.W."/>
            <person name="Kirkpatrick H.A."/>
            <person name="Goeden M.A."/>
            <person name="Rose D.J."/>
            <person name="Mau B."/>
            <person name="Shao Y."/>
        </authorList>
    </citation>
    <scope>NUCLEOTIDE SEQUENCE [LARGE SCALE GENOMIC DNA]</scope>
    <source>
        <strain>K12 / MG1655 / ATCC 47076</strain>
    </source>
</reference>
<reference key="3">
    <citation type="journal article" date="2006" name="Mol. Syst. Biol.">
        <title>Highly accurate genome sequences of Escherichia coli K-12 strains MG1655 and W3110.</title>
        <authorList>
            <person name="Hayashi K."/>
            <person name="Morooka N."/>
            <person name="Yamamoto Y."/>
            <person name="Fujita K."/>
            <person name="Isono K."/>
            <person name="Choi S."/>
            <person name="Ohtsubo E."/>
            <person name="Baba T."/>
            <person name="Wanner B.L."/>
            <person name="Mori H."/>
            <person name="Horiuchi T."/>
        </authorList>
    </citation>
    <scope>NUCLEOTIDE SEQUENCE [LARGE SCALE GENOMIC DNA]</scope>
    <source>
        <strain>K12 / W3110 / ATCC 27325 / DSM 5911</strain>
    </source>
</reference>
<reference key="4">
    <citation type="journal article" date="1983" name="Nucleic Acids Res.">
        <title>Nucleotide sequence of thrC and of the transcription termination region of the threonine operon in Escherichia coli K12.</title>
        <authorList>
            <person name="Parsot C."/>
            <person name="Cossart P."/>
            <person name="Saint-Girons I."/>
            <person name="Cohen G.N."/>
        </authorList>
    </citation>
    <scope>NUCLEOTIDE SEQUENCE [GENOMIC DNA] OF 133-258</scope>
</reference>
<reference key="5">
    <citation type="journal article" date="1995" name="Nucleic Acids Res.">
        <title>Analysis of the Escherichia coli genome VI: DNA sequence of the region from 92.8 through 100 minutes.</title>
        <authorList>
            <person name="Burland V.D."/>
            <person name="Plunkett G. III"/>
            <person name="Sofia H.J."/>
            <person name="Daniels D.L."/>
            <person name="Blattner F.R."/>
        </authorList>
    </citation>
    <scope>NUCLEOTIDE SEQUENCE [LARGE SCALE GENOMIC DNA] OF 138-258</scope>
    <source>
        <strain>K12 / MG1655 / ATCC 47076</strain>
    </source>
</reference>
<reference key="6">
    <citation type="journal article" date="1999" name="Electrophoresis">
        <title>Enrichment of low abundance proteins of Escherichia coli by hydroxyapatite chromatography.</title>
        <authorList>
            <person name="Fountoulakis M."/>
            <person name="Takacs M.-F."/>
            <person name="Berndt P."/>
            <person name="Langen H."/>
            <person name="Takacs B."/>
        </authorList>
    </citation>
    <scope>IDENTIFICATION BY MASS SPECTROMETRY</scope>
    <source>
        <strain>B / BL21</strain>
    </source>
</reference>
<reference key="7">
    <citation type="journal article" date="2011" name="J. Bacteriol.">
        <title>The YaaA protein of the Escherichia coli OxyR regulon lessens hydrogen peroxide toxicity by diminishing the amount of intracellular unincorporated iron.</title>
        <authorList>
            <person name="Liu Y."/>
            <person name="Bauer S.C."/>
            <person name="Imlay J.A."/>
        </authorList>
    </citation>
    <scope>FUNCTION</scope>
    <scope>INDUCTION</scope>
    <scope>DISRUPTION PHENOTYPE</scope>
    <source>
        <strain>K12 / MG1655 / ATCC 47076</strain>
    </source>
</reference>
<reference evidence="6" key="8">
    <citation type="journal article" date="2020" name="J. Biol. Chem.">
        <title>The DUF328 family member YaaA is a DNA-binding protein with a novel fold.</title>
        <authorList>
            <person name="Prahlad J."/>
            <person name="Yuan Y."/>
            <person name="Lin J."/>
            <person name="Chang C.W."/>
            <person name="Iwata-Reuyl D."/>
            <person name="Liu Y."/>
            <person name="de Crecy-Lagard V."/>
            <person name="Wilson M.A."/>
        </authorList>
    </citation>
    <scope>X-RAY CRYSTALLOGRAPHY (1.65 ANGSTROMS) OF 2-258</scope>
    <scope>FUNCTION</scope>
    <scope>DOMAIN</scope>
    <scope>DISRUPTION PHENOTYPE</scope>
    <scope>DNA-BINDING</scope>
    <scope>MOTIF</scope>
    <source>
        <strain>K12 / XL1-Blue</strain>
    </source>
</reference>
<organism>
    <name type="scientific">Escherichia coli (strain K12)</name>
    <dbReference type="NCBI Taxonomy" id="83333"/>
    <lineage>
        <taxon>Bacteria</taxon>
        <taxon>Pseudomonadati</taxon>
        <taxon>Pseudomonadota</taxon>
        <taxon>Gammaproteobacteria</taxon>
        <taxon>Enterobacterales</taxon>
        <taxon>Enterobacteriaceae</taxon>
        <taxon>Escherichia</taxon>
    </lineage>
</organism>